<name>ANMK_SYNPW</name>
<comment type="function">
    <text evidence="1">Catalyzes the specific phosphorylation of 1,6-anhydro-N-acetylmuramic acid (anhMurNAc) with the simultaneous cleavage of the 1,6-anhydro ring, generating MurNAc-6-P. Is required for the utilization of anhMurNAc either imported from the medium or derived from its own cell wall murein, and thus plays a role in cell wall recycling.</text>
</comment>
<comment type="catalytic activity">
    <reaction evidence="1">
        <text>1,6-anhydro-N-acetyl-beta-muramate + ATP + H2O = N-acetyl-D-muramate 6-phosphate + ADP + H(+)</text>
        <dbReference type="Rhea" id="RHEA:24952"/>
        <dbReference type="ChEBI" id="CHEBI:15377"/>
        <dbReference type="ChEBI" id="CHEBI:15378"/>
        <dbReference type="ChEBI" id="CHEBI:30616"/>
        <dbReference type="ChEBI" id="CHEBI:58690"/>
        <dbReference type="ChEBI" id="CHEBI:58722"/>
        <dbReference type="ChEBI" id="CHEBI:456216"/>
        <dbReference type="EC" id="2.7.1.170"/>
    </reaction>
</comment>
<comment type="pathway">
    <text evidence="1">Amino-sugar metabolism; 1,6-anhydro-N-acetylmuramate degradation.</text>
</comment>
<comment type="pathway">
    <text evidence="1">Cell wall biogenesis; peptidoglycan recycling.</text>
</comment>
<comment type="similarity">
    <text evidence="1">Belongs to the anhydro-N-acetylmuramic acid kinase family.</text>
</comment>
<proteinExistence type="inferred from homology"/>
<protein>
    <recommendedName>
        <fullName evidence="1">Anhydro-N-acetylmuramic acid kinase</fullName>
        <ecNumber evidence="1">2.7.1.170</ecNumber>
    </recommendedName>
    <alternativeName>
        <fullName evidence="1">AnhMurNAc kinase</fullName>
    </alternativeName>
</protein>
<evidence type="ECO:0000255" key="1">
    <source>
        <dbReference type="HAMAP-Rule" id="MF_01270"/>
    </source>
</evidence>
<dbReference type="EC" id="2.7.1.170" evidence="1"/>
<dbReference type="EMBL" id="CT971583">
    <property type="protein sequence ID" value="CAK24606.1"/>
    <property type="molecule type" value="Genomic_DNA"/>
</dbReference>
<dbReference type="SMR" id="A5GNU1"/>
<dbReference type="STRING" id="32051.SynWH7803_2180"/>
<dbReference type="KEGG" id="syx:SynWH7803_2180"/>
<dbReference type="eggNOG" id="COG2377">
    <property type="taxonomic scope" value="Bacteria"/>
</dbReference>
<dbReference type="HOGENOM" id="CLU_038782_1_0_3"/>
<dbReference type="OrthoDB" id="9763949at2"/>
<dbReference type="UniPathway" id="UPA00343"/>
<dbReference type="UniPathway" id="UPA00544"/>
<dbReference type="Proteomes" id="UP000001566">
    <property type="component" value="Chromosome"/>
</dbReference>
<dbReference type="GO" id="GO:0005524">
    <property type="term" value="F:ATP binding"/>
    <property type="evidence" value="ECO:0007669"/>
    <property type="project" value="UniProtKB-UniRule"/>
</dbReference>
<dbReference type="GO" id="GO:0016301">
    <property type="term" value="F:kinase activity"/>
    <property type="evidence" value="ECO:0007669"/>
    <property type="project" value="UniProtKB-KW"/>
</dbReference>
<dbReference type="GO" id="GO:0016773">
    <property type="term" value="F:phosphotransferase activity, alcohol group as acceptor"/>
    <property type="evidence" value="ECO:0007669"/>
    <property type="project" value="UniProtKB-UniRule"/>
</dbReference>
<dbReference type="GO" id="GO:0097175">
    <property type="term" value="P:1,6-anhydro-N-acetyl-beta-muramic acid catabolic process"/>
    <property type="evidence" value="ECO:0007669"/>
    <property type="project" value="UniProtKB-UniRule"/>
</dbReference>
<dbReference type="GO" id="GO:0006040">
    <property type="term" value="P:amino sugar metabolic process"/>
    <property type="evidence" value="ECO:0007669"/>
    <property type="project" value="InterPro"/>
</dbReference>
<dbReference type="GO" id="GO:0009254">
    <property type="term" value="P:peptidoglycan turnover"/>
    <property type="evidence" value="ECO:0007669"/>
    <property type="project" value="UniProtKB-UniRule"/>
</dbReference>
<dbReference type="Gene3D" id="3.30.420.40">
    <property type="match status" value="2"/>
</dbReference>
<dbReference type="HAMAP" id="MF_01270">
    <property type="entry name" value="AnhMurNAc_kinase"/>
    <property type="match status" value="1"/>
</dbReference>
<dbReference type="InterPro" id="IPR005338">
    <property type="entry name" value="Anhydro_N_Ac-Mur_kinase"/>
</dbReference>
<dbReference type="InterPro" id="IPR043129">
    <property type="entry name" value="ATPase_NBD"/>
</dbReference>
<dbReference type="NCBIfam" id="NF007145">
    <property type="entry name" value="PRK09585.2-5"/>
    <property type="match status" value="1"/>
</dbReference>
<dbReference type="PANTHER" id="PTHR30605">
    <property type="entry name" value="ANHYDRO-N-ACETYLMURAMIC ACID KINASE"/>
    <property type="match status" value="1"/>
</dbReference>
<dbReference type="PANTHER" id="PTHR30605:SF0">
    <property type="entry name" value="ANHYDRO-N-ACETYLMURAMIC ACID KINASE"/>
    <property type="match status" value="1"/>
</dbReference>
<dbReference type="Pfam" id="PF03702">
    <property type="entry name" value="AnmK"/>
    <property type="match status" value="1"/>
</dbReference>
<dbReference type="SUPFAM" id="SSF53067">
    <property type="entry name" value="Actin-like ATPase domain"/>
    <property type="match status" value="1"/>
</dbReference>
<gene>
    <name evidence="1" type="primary">anmK</name>
    <name type="ordered locus">SynWH7803_2180</name>
</gene>
<reference key="1">
    <citation type="submission" date="2006-05" db="EMBL/GenBank/DDBJ databases">
        <authorList>
            <consortium name="Genoscope"/>
        </authorList>
    </citation>
    <scope>NUCLEOTIDE SEQUENCE [LARGE SCALE GENOMIC DNA]</scope>
    <source>
        <strain>WH7803</strain>
    </source>
</reference>
<sequence length="387" mass="41442">MRVLGLMSGTSADGVDAALAQFHGRPEAPHWDLLNTASVPYPSALKERLIRMAQGEPTRACDVLEMSEAVTEIQAAAAHLCDPEQSASLLGCHGQTMWHRPPVPSGESSRESGRRGASWQMLQAPLLAHLSGRPVIHDFRAADLALGGQGAPLVPMADAALMGRIDGWRGLLNLGGIANITLIPPNAGPDRQHPVLGWDCGPANTLMDLAMTRLSGGQDTFDLDGALAGRGTVCEETLERWLQEPYFLSSPPKSTGREVFGQDDLNRRLQQLAPHSAANQLATLTAFSAAVVAQDLRRLTATGQPQPVELLVAGGGCRNQTLMRQLRRRCLGVRVRPSSDLNLPTQFREALVFALLAWWHQRGHPGNAPAITGAAKATVLGLRVNPA</sequence>
<feature type="chain" id="PRO_1000214175" description="Anhydro-N-acetylmuramic acid kinase">
    <location>
        <begin position="1"/>
        <end position="387"/>
    </location>
</feature>
<feature type="binding site" evidence="1">
    <location>
        <begin position="9"/>
        <end position="16"/>
    </location>
    <ligand>
        <name>ATP</name>
        <dbReference type="ChEBI" id="CHEBI:30616"/>
    </ligand>
</feature>
<keyword id="KW-0067">ATP-binding</keyword>
<keyword id="KW-0119">Carbohydrate metabolism</keyword>
<keyword id="KW-0418">Kinase</keyword>
<keyword id="KW-0547">Nucleotide-binding</keyword>
<keyword id="KW-1185">Reference proteome</keyword>
<keyword id="KW-0808">Transferase</keyword>
<accession>A5GNU1</accession>
<organism>
    <name type="scientific">Synechococcus sp. (strain WH7803)</name>
    <dbReference type="NCBI Taxonomy" id="32051"/>
    <lineage>
        <taxon>Bacteria</taxon>
        <taxon>Bacillati</taxon>
        <taxon>Cyanobacteriota</taxon>
        <taxon>Cyanophyceae</taxon>
        <taxon>Synechococcales</taxon>
        <taxon>Synechococcaceae</taxon>
        <taxon>Synechococcus</taxon>
    </lineage>
</organism>